<gene>
    <name evidence="5" type="primary">LEA17</name>
    <name evidence="6" type="synonym">LEA1</name>
    <name evidence="4" type="synonym">LEA3-2</name>
    <name evidence="8" type="ordered locus">Os03g0322900</name>
    <name evidence="7" type="ordered locus">LOC_Os03g20680</name>
    <name evidence="9" type="ORF">OsJ_010237</name>
</gene>
<accession>A3AHG5</accession>
<accession>K4F957</accession>
<accession>P83196</accession>
<accession>Q10M52</accession>
<feature type="chain" id="PRO_0000271181" description="Late embryogenesis abundant protein 17">
    <location>
        <begin position="1"/>
        <end position="344"/>
    </location>
</feature>
<feature type="region of interest" description="Disordered" evidence="2">
    <location>
        <begin position="1"/>
        <end position="20"/>
    </location>
</feature>
<feature type="region of interest" description="Disordered" evidence="2">
    <location>
        <begin position="116"/>
        <end position="258"/>
    </location>
</feature>
<feature type="coiled-coil region" evidence="1">
    <location>
        <begin position="3"/>
        <end position="52"/>
    </location>
</feature>
<feature type="compositionally biased region" description="Basic and acidic residues" evidence="2">
    <location>
        <begin position="116"/>
        <end position="163"/>
    </location>
</feature>
<feature type="compositionally biased region" description="Basic and acidic residues" evidence="2">
    <location>
        <begin position="172"/>
        <end position="230"/>
    </location>
</feature>
<feature type="compositionally biased region" description="Basic and acidic residues" evidence="2">
    <location>
        <begin position="238"/>
        <end position="252"/>
    </location>
</feature>
<dbReference type="EMBL" id="JQ043381">
    <property type="protein sequence ID" value="AEY11352.1"/>
    <property type="molecule type" value="mRNA"/>
</dbReference>
<dbReference type="EMBL" id="DP000009">
    <property type="protein sequence ID" value="ABF95684.1"/>
    <property type="molecule type" value="Genomic_DNA"/>
</dbReference>
<dbReference type="EMBL" id="AP008209">
    <property type="protein sequence ID" value="BAF11884.2"/>
    <property type="status" value="ALT_SEQ"/>
    <property type="molecule type" value="Genomic_DNA"/>
</dbReference>
<dbReference type="EMBL" id="AP014959">
    <property type="protein sequence ID" value="BAS83958.1"/>
    <property type="molecule type" value="Genomic_DNA"/>
</dbReference>
<dbReference type="EMBL" id="CM000140">
    <property type="protein sequence ID" value="EAZ26754.1"/>
    <property type="molecule type" value="Genomic_DNA"/>
</dbReference>
<dbReference type="RefSeq" id="XP_015629108.1">
    <property type="nucleotide sequence ID" value="XM_015773622.1"/>
</dbReference>
<dbReference type="SMR" id="A3AHG5"/>
<dbReference type="FunCoup" id="A3AHG5">
    <property type="interactions" value="506"/>
</dbReference>
<dbReference type="STRING" id="39947.A3AHG5"/>
<dbReference type="iPTMnet" id="A3AHG5"/>
<dbReference type="PaxDb" id="39947-A3AHG5"/>
<dbReference type="EnsemblPlants" id="Os03t0322900-01">
    <property type="protein sequence ID" value="Os03t0322900-01"/>
    <property type="gene ID" value="Os03g0322900"/>
</dbReference>
<dbReference type="Gramene" id="Os03t0322900-01">
    <property type="protein sequence ID" value="Os03t0322900-01"/>
    <property type="gene ID" value="Os03g0322900"/>
</dbReference>
<dbReference type="KEGG" id="dosa:Os03g0322900"/>
<dbReference type="eggNOG" id="ENOG502R2QW">
    <property type="taxonomic scope" value="Eukaryota"/>
</dbReference>
<dbReference type="HOGENOM" id="CLU_072697_0_0_1"/>
<dbReference type="InParanoid" id="A3AHG5"/>
<dbReference type="OMA" id="CAHRHGK"/>
<dbReference type="OrthoDB" id="1907061at2759"/>
<dbReference type="Proteomes" id="UP000000763">
    <property type="component" value="Chromosome 3"/>
</dbReference>
<dbReference type="Proteomes" id="UP000007752">
    <property type="component" value="Chromosome 3"/>
</dbReference>
<dbReference type="Proteomes" id="UP000059680">
    <property type="component" value="Chromosome 3"/>
</dbReference>
<dbReference type="GO" id="GO:0005634">
    <property type="term" value="C:nucleus"/>
    <property type="evidence" value="ECO:0000314"/>
    <property type="project" value="CACAO"/>
</dbReference>
<dbReference type="GO" id="GO:0009631">
    <property type="term" value="P:cold acclimation"/>
    <property type="evidence" value="ECO:0000318"/>
    <property type="project" value="GO_Central"/>
</dbReference>
<dbReference type="GO" id="GO:1901002">
    <property type="term" value="P:positive regulation of response to salt stress"/>
    <property type="evidence" value="ECO:0000315"/>
    <property type="project" value="UniProtKB"/>
</dbReference>
<dbReference type="GO" id="GO:1902584">
    <property type="term" value="P:positive regulation of response to water deprivation"/>
    <property type="evidence" value="ECO:0000315"/>
    <property type="project" value="UniProtKB"/>
</dbReference>
<dbReference type="GO" id="GO:0050826">
    <property type="term" value="P:response to freezing"/>
    <property type="evidence" value="ECO:0000314"/>
    <property type="project" value="CACAO"/>
</dbReference>
<dbReference type="Gene3D" id="6.10.140.1430">
    <property type="match status" value="2"/>
</dbReference>
<dbReference type="PANTHER" id="PTHR47877">
    <property type="entry name" value="LATE EMBRYOGENESIS ABUNDANT DOMAIN-CONTAINING PROTEIN / LEA DOMAIN-CONTAINING PROTEIN"/>
    <property type="match status" value="1"/>
</dbReference>
<dbReference type="PANTHER" id="PTHR47877:SF8">
    <property type="entry name" value="LATE EMBRYOGENESIS ABUNDANT PROTEIN 17"/>
    <property type="match status" value="1"/>
</dbReference>
<dbReference type="SUPFAM" id="SSF58113">
    <property type="entry name" value="Apolipoprotein A-I"/>
    <property type="match status" value="1"/>
</dbReference>
<organism>
    <name type="scientific">Oryza sativa subsp. japonica</name>
    <name type="common">Rice</name>
    <dbReference type="NCBI Taxonomy" id="39947"/>
    <lineage>
        <taxon>Eukaryota</taxon>
        <taxon>Viridiplantae</taxon>
        <taxon>Streptophyta</taxon>
        <taxon>Embryophyta</taxon>
        <taxon>Tracheophyta</taxon>
        <taxon>Spermatophyta</taxon>
        <taxon>Magnoliopsida</taxon>
        <taxon>Liliopsida</taxon>
        <taxon>Poales</taxon>
        <taxon>Poaceae</taxon>
        <taxon>BOP clade</taxon>
        <taxon>Oryzoideae</taxon>
        <taxon>Oryzeae</taxon>
        <taxon>Oryzinae</taxon>
        <taxon>Oryza</taxon>
        <taxon>Oryza sativa</taxon>
    </lineage>
</organism>
<proteinExistence type="evidence at transcript level"/>
<evidence type="ECO:0000255" key="1"/>
<evidence type="ECO:0000256" key="2">
    <source>
        <dbReference type="SAM" id="MobiDB-lite"/>
    </source>
</evidence>
<evidence type="ECO:0000269" key="3">
    <source>
    </source>
</evidence>
<evidence type="ECO:0000303" key="4">
    <source>
    </source>
</evidence>
<evidence type="ECO:0000303" key="5">
    <source ref="7"/>
</evidence>
<evidence type="ECO:0000305" key="6"/>
<evidence type="ECO:0000312" key="7">
    <source>
        <dbReference type="EMBL" id="ABF95684.1"/>
    </source>
</evidence>
<evidence type="ECO:0000312" key="8">
    <source>
        <dbReference type="EMBL" id="BAS83958.1"/>
    </source>
</evidence>
<evidence type="ECO:0000312" key="9">
    <source>
        <dbReference type="EMBL" id="EAZ26754.1"/>
    </source>
</evidence>
<comment type="function">
    <text evidence="3">Involved in abiotic stress responses. May function as chaperone and contribute to prevent the formation of damaging protein aggregates.</text>
</comment>
<comment type="subcellular location">
    <subcellularLocation>
        <location evidence="3">Nucleus</location>
    </subcellularLocation>
</comment>
<comment type="tissue specificity">
    <text evidence="3">Expressed in embryos.</text>
</comment>
<comment type="induction">
    <text evidence="3">Induced by abscisic acid (ABA), salt stress and dehydration.</text>
</comment>
<comment type="miscellaneous">
    <text evidence="3">Plants overexpressing LEA17 display enhanced tolerance to salt stress, drought stress and osmotic shock.</text>
</comment>
<comment type="similarity">
    <text evidence="6">Belongs to the LEA type 4 family.</text>
</comment>
<comment type="sequence caution" evidence="6">
    <conflict type="erroneous gene model prediction">
        <sequence resource="EMBL-CDS" id="BAF11884"/>
    </conflict>
</comment>
<name>LEA17_ORYSJ</name>
<protein>
    <recommendedName>
        <fullName evidence="6">Late embryogenesis abundant protein 17</fullName>
        <shortName evidence="5">OsLEA17</shortName>
    </recommendedName>
    <alternativeName>
        <fullName evidence="6">Late embryogenesis abundant protein 1</fullName>
    </alternativeName>
    <alternativeName>
        <fullName evidence="4">OsLEA3-2</fullName>
    </alternativeName>
</protein>
<sequence>MASRQDRREARAEADARRAAEEIARARDERVMQAEVDARSAADEIARARADRGAATMGADTAHHAAGGGGILESVQEGAKSFVSAVGRTFGGARDTAAEKTSQTADATRDKLGEYKDYTADKARETNDSVARKTNETADASRDKLGEYKDYTADKTRETKDAVAQKASDASEATKNKLGEYKDALARKTRDAKDTTAQKATEFKDGVKATAQETRDATADTARKAKDATKDTTQTAADKARETAATHDDATDKGQGQGLLGALGNVTGAIKEKLTVSPAATQEHLGGGEERAVKERAAEKAASVYFEEKDRLTRERAAERVDKCVEKCVEGCPDATCAHRHGKM</sequence>
<keyword id="KW-0175">Coiled coil</keyword>
<keyword id="KW-0539">Nucleus</keyword>
<keyword id="KW-1185">Reference proteome</keyword>
<keyword id="KW-0346">Stress response</keyword>
<reference key="1">
    <citation type="journal article" date="2012" name="PLoS ONE">
        <title>OsLEA3-2, an abiotic stress induced gene of rice plays a key role in salt and drought tolerance.</title>
        <authorList>
            <person name="Duan J."/>
            <person name="Cai W."/>
        </authorList>
    </citation>
    <scope>NUCLEOTIDE SEQUENCE [MRNA]</scope>
    <scope>FUNCTION</scope>
    <scope>SUBCELLULAR LOCATION</scope>
    <scope>TISSUE SPECIFICITY</scope>
    <scope>INDUCTION</scope>
    <source>
        <strain>cv. Zhonghua 11</strain>
    </source>
</reference>
<reference key="2">
    <citation type="journal article" date="2005" name="Genome Res.">
        <title>Sequence, annotation, and analysis of synteny between rice chromosome 3 and diverged grass species.</title>
        <authorList>
            <consortium name="The rice chromosome 3 sequencing consortium"/>
            <person name="Buell C.R."/>
            <person name="Yuan Q."/>
            <person name="Ouyang S."/>
            <person name="Liu J."/>
            <person name="Zhu W."/>
            <person name="Wang A."/>
            <person name="Maiti R."/>
            <person name="Haas B."/>
            <person name="Wortman J."/>
            <person name="Pertea M."/>
            <person name="Jones K.M."/>
            <person name="Kim M."/>
            <person name="Overton L."/>
            <person name="Tsitrin T."/>
            <person name="Fadrosh D."/>
            <person name="Bera J."/>
            <person name="Weaver B."/>
            <person name="Jin S."/>
            <person name="Johri S."/>
            <person name="Reardon M."/>
            <person name="Webb K."/>
            <person name="Hill J."/>
            <person name="Moffat K."/>
            <person name="Tallon L."/>
            <person name="Van Aken S."/>
            <person name="Lewis M."/>
            <person name="Utterback T."/>
            <person name="Feldblyum T."/>
            <person name="Zismann V."/>
            <person name="Iobst S."/>
            <person name="Hsiao J."/>
            <person name="de Vazeille A.R."/>
            <person name="Salzberg S.L."/>
            <person name="White O."/>
            <person name="Fraser C.M."/>
            <person name="Yu Y."/>
            <person name="Kim H."/>
            <person name="Rambo T."/>
            <person name="Currie J."/>
            <person name="Collura K."/>
            <person name="Kernodle-Thompson S."/>
            <person name="Wei F."/>
            <person name="Kudrna K."/>
            <person name="Ammiraju J.S.S."/>
            <person name="Luo M."/>
            <person name="Goicoechea J.L."/>
            <person name="Wing R.A."/>
            <person name="Henry D."/>
            <person name="Oates R."/>
            <person name="Palmer M."/>
            <person name="Pries G."/>
            <person name="Saski C."/>
            <person name="Simmons J."/>
            <person name="Soderlund C."/>
            <person name="Nelson W."/>
            <person name="de la Bastide M."/>
            <person name="Spiegel L."/>
            <person name="Nascimento L."/>
            <person name="Huang E."/>
            <person name="Preston R."/>
            <person name="Zutavern T."/>
            <person name="Palmer L."/>
            <person name="O'Shaughnessy A."/>
            <person name="Dike S."/>
            <person name="McCombie W.R."/>
            <person name="Minx P."/>
            <person name="Cordum H."/>
            <person name="Wilson R."/>
            <person name="Jin W."/>
            <person name="Lee H.R."/>
            <person name="Jiang J."/>
            <person name="Jackson S."/>
        </authorList>
    </citation>
    <scope>NUCLEOTIDE SEQUENCE [LARGE SCALE GENOMIC DNA]</scope>
    <source>
        <strain>cv. Nipponbare</strain>
    </source>
</reference>
<reference key="3">
    <citation type="journal article" date="2005" name="Nature">
        <title>The map-based sequence of the rice genome.</title>
        <authorList>
            <consortium name="International rice genome sequencing project (IRGSP)"/>
        </authorList>
    </citation>
    <scope>NUCLEOTIDE SEQUENCE [LARGE SCALE GENOMIC DNA]</scope>
    <source>
        <strain>cv. Nipponbare</strain>
    </source>
</reference>
<reference key="4">
    <citation type="journal article" date="2008" name="Nucleic Acids Res.">
        <title>The rice annotation project database (RAP-DB): 2008 update.</title>
        <authorList>
            <consortium name="The rice annotation project (RAP)"/>
        </authorList>
    </citation>
    <scope>GENOME REANNOTATION</scope>
    <source>
        <strain>cv. Nipponbare</strain>
    </source>
</reference>
<reference key="5">
    <citation type="journal article" date="2013" name="Rice">
        <title>Improvement of the Oryza sativa Nipponbare reference genome using next generation sequence and optical map data.</title>
        <authorList>
            <person name="Kawahara Y."/>
            <person name="de la Bastide M."/>
            <person name="Hamilton J.P."/>
            <person name="Kanamori H."/>
            <person name="McCombie W.R."/>
            <person name="Ouyang S."/>
            <person name="Schwartz D.C."/>
            <person name="Tanaka T."/>
            <person name="Wu J."/>
            <person name="Zhou S."/>
            <person name="Childs K.L."/>
            <person name="Davidson R.M."/>
            <person name="Lin H."/>
            <person name="Quesada-Ocampo L."/>
            <person name="Vaillancourt B."/>
            <person name="Sakai H."/>
            <person name="Lee S.S."/>
            <person name="Kim J."/>
            <person name="Numa H."/>
            <person name="Itoh T."/>
            <person name="Buell C.R."/>
            <person name="Matsumoto T."/>
        </authorList>
    </citation>
    <scope>GENOME REANNOTATION</scope>
    <source>
        <strain>cv. Nipponbare</strain>
    </source>
</reference>
<reference key="6">
    <citation type="journal article" date="2005" name="PLoS Biol.">
        <title>The genomes of Oryza sativa: a history of duplications.</title>
        <authorList>
            <person name="Yu J."/>
            <person name="Wang J."/>
            <person name="Lin W."/>
            <person name="Li S."/>
            <person name="Li H."/>
            <person name="Zhou J."/>
            <person name="Ni P."/>
            <person name="Dong W."/>
            <person name="Hu S."/>
            <person name="Zeng C."/>
            <person name="Zhang J."/>
            <person name="Zhang Y."/>
            <person name="Li R."/>
            <person name="Xu Z."/>
            <person name="Li S."/>
            <person name="Li X."/>
            <person name="Zheng H."/>
            <person name="Cong L."/>
            <person name="Lin L."/>
            <person name="Yin J."/>
            <person name="Geng J."/>
            <person name="Li G."/>
            <person name="Shi J."/>
            <person name="Liu J."/>
            <person name="Lv H."/>
            <person name="Li J."/>
            <person name="Wang J."/>
            <person name="Deng Y."/>
            <person name="Ran L."/>
            <person name="Shi X."/>
            <person name="Wang X."/>
            <person name="Wu Q."/>
            <person name="Li C."/>
            <person name="Ren X."/>
            <person name="Wang J."/>
            <person name="Wang X."/>
            <person name="Li D."/>
            <person name="Liu D."/>
            <person name="Zhang X."/>
            <person name="Ji Z."/>
            <person name="Zhao W."/>
            <person name="Sun Y."/>
            <person name="Zhang Z."/>
            <person name="Bao J."/>
            <person name="Han Y."/>
            <person name="Dong L."/>
            <person name="Ji J."/>
            <person name="Chen P."/>
            <person name="Wu S."/>
            <person name="Liu J."/>
            <person name="Xiao Y."/>
            <person name="Bu D."/>
            <person name="Tan J."/>
            <person name="Yang L."/>
            <person name="Ye C."/>
            <person name="Zhang J."/>
            <person name="Xu J."/>
            <person name="Zhou Y."/>
            <person name="Yu Y."/>
            <person name="Zhang B."/>
            <person name="Zhuang S."/>
            <person name="Wei H."/>
            <person name="Liu B."/>
            <person name="Lei M."/>
            <person name="Yu H."/>
            <person name="Li Y."/>
            <person name="Xu H."/>
            <person name="Wei S."/>
            <person name="He X."/>
            <person name="Fang L."/>
            <person name="Zhang Z."/>
            <person name="Zhang Y."/>
            <person name="Huang X."/>
            <person name="Su Z."/>
            <person name="Tong W."/>
            <person name="Li J."/>
            <person name="Tong Z."/>
            <person name="Li S."/>
            <person name="Ye J."/>
            <person name="Wang L."/>
            <person name="Fang L."/>
            <person name="Lei T."/>
            <person name="Chen C.-S."/>
            <person name="Chen H.-C."/>
            <person name="Xu Z."/>
            <person name="Li H."/>
            <person name="Huang H."/>
            <person name="Zhang F."/>
            <person name="Xu H."/>
            <person name="Li N."/>
            <person name="Zhao C."/>
            <person name="Li S."/>
            <person name="Dong L."/>
            <person name="Huang Y."/>
            <person name="Li L."/>
            <person name="Xi Y."/>
            <person name="Qi Q."/>
            <person name="Li W."/>
            <person name="Zhang B."/>
            <person name="Hu W."/>
            <person name="Zhang Y."/>
            <person name="Tian X."/>
            <person name="Jiao Y."/>
            <person name="Liang X."/>
            <person name="Jin J."/>
            <person name="Gao L."/>
            <person name="Zheng W."/>
            <person name="Hao B."/>
            <person name="Liu S.-M."/>
            <person name="Wang W."/>
            <person name="Yuan L."/>
            <person name="Cao M."/>
            <person name="McDermott J."/>
            <person name="Samudrala R."/>
            <person name="Wang J."/>
            <person name="Wong G.K.-S."/>
            <person name="Yang H."/>
        </authorList>
    </citation>
    <scope>NUCLEOTIDE SEQUENCE [LARGE SCALE GENOMIC DNA]</scope>
    <source>
        <strain>cv. Nipponbare</strain>
    </source>
</reference>
<reference key="7">
    <citation type="journal article" date="2007" name="Plant Sci.">
        <title>Genome-scale identification and analysis of LEA genes in rice (Oryza sativa L.).</title>
        <authorList>
            <person name="Wang X.S."/>
            <person name="Zhu H.B."/>
            <person name="Jin G.L."/>
            <person name="Liu H.L."/>
            <person name="Wu W.R."/>
            <person name="Zhu J."/>
        </authorList>
    </citation>
    <scope>GENE FAMILY</scope>
    <scope>NOMENCLATURE</scope>
</reference>